<reference key="1">
    <citation type="journal article" date="1995" name="DNA Res.">
        <title>Sequence analysis of the genome of the unicellular cyanobacterium Synechocystis sp. strain PCC6803. I. Sequence features in the 1 Mb region from map positions 64% to 92% of the genome.</title>
        <authorList>
            <person name="Kaneko T."/>
            <person name="Tanaka A."/>
            <person name="Sato S."/>
            <person name="Kotani H."/>
            <person name="Sazuka T."/>
            <person name="Miyajima N."/>
            <person name="Sugiura M."/>
            <person name="Tabata S."/>
        </authorList>
    </citation>
    <scope>NUCLEOTIDE SEQUENCE [LARGE SCALE GENOMIC DNA]</scope>
    <source>
        <strain>ATCC 27184 / PCC 6803 / N-1</strain>
    </source>
</reference>
<reference key="2">
    <citation type="journal article" date="1996" name="DNA Res.">
        <title>Sequence analysis of the genome of the unicellular cyanobacterium Synechocystis sp. strain PCC6803. II. Sequence determination of the entire genome and assignment of potential protein-coding regions.</title>
        <authorList>
            <person name="Kaneko T."/>
            <person name="Sato S."/>
            <person name="Kotani H."/>
            <person name="Tanaka A."/>
            <person name="Asamizu E."/>
            <person name="Nakamura Y."/>
            <person name="Miyajima N."/>
            <person name="Hirosawa M."/>
            <person name="Sugiura M."/>
            <person name="Sasamoto S."/>
            <person name="Kimura T."/>
            <person name="Hosouchi T."/>
            <person name="Matsuno A."/>
            <person name="Muraki A."/>
            <person name="Nakazaki N."/>
            <person name="Naruo K."/>
            <person name="Okumura S."/>
            <person name="Shimpo S."/>
            <person name="Takeuchi C."/>
            <person name="Wada T."/>
            <person name="Watanabe A."/>
            <person name="Yamada M."/>
            <person name="Yasuda M."/>
            <person name="Tabata S."/>
        </authorList>
    </citation>
    <scope>NUCLEOTIDE SEQUENCE [LARGE SCALE GENOMIC DNA]</scope>
    <source>
        <strain>ATCC 27184 / PCC 6803 / Kazusa</strain>
    </source>
</reference>
<evidence type="ECO:0000250" key="1"/>
<evidence type="ECO:0000256" key="2">
    <source>
        <dbReference type="SAM" id="MobiDB-lite"/>
    </source>
</evidence>
<evidence type="ECO:0000305" key="3"/>
<dbReference type="EC" id="5.2.1.8"/>
<dbReference type="EMBL" id="BA000022">
    <property type="protein sequence ID" value="BAA10868.1"/>
    <property type="molecule type" value="Genomic_DNA"/>
</dbReference>
<dbReference type="PIR" id="S76021">
    <property type="entry name" value="S76021"/>
</dbReference>
<dbReference type="SMR" id="Q55511"/>
<dbReference type="FunCoup" id="Q55511">
    <property type="interactions" value="538"/>
</dbReference>
<dbReference type="IntAct" id="Q55511">
    <property type="interactions" value="2"/>
</dbReference>
<dbReference type="STRING" id="1148.gene:10500374"/>
<dbReference type="PaxDb" id="1148-1001378"/>
<dbReference type="EnsemblBacteria" id="BAA10868">
    <property type="protein sequence ID" value="BAA10868"/>
    <property type="gene ID" value="BAA10868"/>
</dbReference>
<dbReference type="KEGG" id="syn:sll0533"/>
<dbReference type="eggNOG" id="COG0544">
    <property type="taxonomic scope" value="Bacteria"/>
</dbReference>
<dbReference type="InParanoid" id="Q55511"/>
<dbReference type="PhylomeDB" id="Q55511"/>
<dbReference type="Proteomes" id="UP000001425">
    <property type="component" value="Chromosome"/>
</dbReference>
<dbReference type="GO" id="GO:0005737">
    <property type="term" value="C:cytoplasm"/>
    <property type="evidence" value="ECO:0007669"/>
    <property type="project" value="UniProtKB-SubCell"/>
</dbReference>
<dbReference type="GO" id="GO:0003755">
    <property type="term" value="F:peptidyl-prolyl cis-trans isomerase activity"/>
    <property type="evidence" value="ECO:0000318"/>
    <property type="project" value="GO_Central"/>
</dbReference>
<dbReference type="GO" id="GO:0044183">
    <property type="term" value="F:protein folding chaperone"/>
    <property type="evidence" value="ECO:0000318"/>
    <property type="project" value="GO_Central"/>
</dbReference>
<dbReference type="GO" id="GO:0043022">
    <property type="term" value="F:ribosome binding"/>
    <property type="evidence" value="ECO:0000318"/>
    <property type="project" value="GO_Central"/>
</dbReference>
<dbReference type="GO" id="GO:0051083">
    <property type="term" value="P:'de novo' cotranslational protein folding"/>
    <property type="evidence" value="ECO:0000318"/>
    <property type="project" value="GO_Central"/>
</dbReference>
<dbReference type="GO" id="GO:0051301">
    <property type="term" value="P:cell division"/>
    <property type="evidence" value="ECO:0007669"/>
    <property type="project" value="UniProtKB-KW"/>
</dbReference>
<dbReference type="GO" id="GO:0061077">
    <property type="term" value="P:chaperone-mediated protein folding"/>
    <property type="evidence" value="ECO:0000318"/>
    <property type="project" value="GO_Central"/>
</dbReference>
<dbReference type="GO" id="GO:0015031">
    <property type="term" value="P:protein transport"/>
    <property type="evidence" value="ECO:0007669"/>
    <property type="project" value="UniProtKB-UniRule"/>
</dbReference>
<dbReference type="GO" id="GO:0043335">
    <property type="term" value="P:protein unfolding"/>
    <property type="evidence" value="ECO:0000318"/>
    <property type="project" value="GO_Central"/>
</dbReference>
<dbReference type="FunFam" id="3.30.70.1050:FF:000004">
    <property type="entry name" value="Trigger factor"/>
    <property type="match status" value="1"/>
</dbReference>
<dbReference type="Gene3D" id="3.10.50.40">
    <property type="match status" value="1"/>
</dbReference>
<dbReference type="Gene3D" id="3.30.70.1050">
    <property type="entry name" value="Trigger factor ribosome-binding domain"/>
    <property type="match status" value="1"/>
</dbReference>
<dbReference type="Gene3D" id="1.10.3120.10">
    <property type="entry name" value="Trigger factor, C-terminal domain"/>
    <property type="match status" value="1"/>
</dbReference>
<dbReference type="HAMAP" id="MF_00303">
    <property type="entry name" value="Trigger_factor_Tig"/>
    <property type="match status" value="1"/>
</dbReference>
<dbReference type="InterPro" id="IPR046357">
    <property type="entry name" value="PPIase_dom_sf"/>
</dbReference>
<dbReference type="InterPro" id="IPR001179">
    <property type="entry name" value="PPIase_FKBP_dom"/>
</dbReference>
<dbReference type="InterPro" id="IPR005215">
    <property type="entry name" value="Trig_fac"/>
</dbReference>
<dbReference type="InterPro" id="IPR008880">
    <property type="entry name" value="Trigger_fac_C"/>
</dbReference>
<dbReference type="InterPro" id="IPR037041">
    <property type="entry name" value="Trigger_fac_C_sf"/>
</dbReference>
<dbReference type="InterPro" id="IPR008881">
    <property type="entry name" value="Trigger_fac_ribosome-bd_bac"/>
</dbReference>
<dbReference type="InterPro" id="IPR036611">
    <property type="entry name" value="Trigger_fac_ribosome-bd_sf"/>
</dbReference>
<dbReference type="InterPro" id="IPR027304">
    <property type="entry name" value="Trigger_fact/SurA_dom_sf"/>
</dbReference>
<dbReference type="NCBIfam" id="TIGR00115">
    <property type="entry name" value="tig"/>
    <property type="match status" value="1"/>
</dbReference>
<dbReference type="PANTHER" id="PTHR30560">
    <property type="entry name" value="TRIGGER FACTOR CHAPERONE AND PEPTIDYL-PROLYL CIS/TRANS ISOMERASE"/>
    <property type="match status" value="1"/>
</dbReference>
<dbReference type="PANTHER" id="PTHR30560:SF3">
    <property type="entry name" value="TRIGGER FACTOR-LIKE PROTEIN TIG, CHLOROPLASTIC"/>
    <property type="match status" value="1"/>
</dbReference>
<dbReference type="Pfam" id="PF00254">
    <property type="entry name" value="FKBP_C"/>
    <property type="match status" value="1"/>
</dbReference>
<dbReference type="Pfam" id="PF05698">
    <property type="entry name" value="Trigger_C"/>
    <property type="match status" value="1"/>
</dbReference>
<dbReference type="Pfam" id="PF05697">
    <property type="entry name" value="Trigger_N"/>
    <property type="match status" value="1"/>
</dbReference>
<dbReference type="PIRSF" id="PIRSF003095">
    <property type="entry name" value="Trigger_factor"/>
    <property type="match status" value="1"/>
</dbReference>
<dbReference type="SUPFAM" id="SSF54534">
    <property type="entry name" value="FKBP-like"/>
    <property type="match status" value="1"/>
</dbReference>
<dbReference type="SUPFAM" id="SSF109998">
    <property type="entry name" value="Triger factor/SurA peptide-binding domain-like"/>
    <property type="match status" value="1"/>
</dbReference>
<dbReference type="SUPFAM" id="SSF102735">
    <property type="entry name" value="Trigger factor ribosome-binding domain"/>
    <property type="match status" value="1"/>
</dbReference>
<protein>
    <recommendedName>
        <fullName>Trigger factor</fullName>
        <shortName>TF</shortName>
        <ecNumber>5.2.1.8</ecNumber>
    </recommendedName>
    <alternativeName>
        <fullName>PPIase</fullName>
    </alternativeName>
</protein>
<keyword id="KW-0131">Cell cycle</keyword>
<keyword id="KW-0132">Cell division</keyword>
<keyword id="KW-0143">Chaperone</keyword>
<keyword id="KW-0963">Cytoplasm</keyword>
<keyword id="KW-0413">Isomerase</keyword>
<keyword id="KW-1185">Reference proteome</keyword>
<keyword id="KW-0697">Rotamase</keyword>
<gene>
    <name type="primary">tig</name>
    <name type="ordered locus">sll0533</name>
</gene>
<comment type="function">
    <text evidence="1">Involved in protein export. Acts as a chaperone by maintaining the newly synthesized protein in an open conformation. Functions as a peptidyl-prolyl cis-trans isomerase (By similarity).</text>
</comment>
<comment type="catalytic activity">
    <reaction>
        <text>[protein]-peptidylproline (omega=180) = [protein]-peptidylproline (omega=0)</text>
        <dbReference type="Rhea" id="RHEA:16237"/>
        <dbReference type="Rhea" id="RHEA-COMP:10747"/>
        <dbReference type="Rhea" id="RHEA-COMP:10748"/>
        <dbReference type="ChEBI" id="CHEBI:83833"/>
        <dbReference type="ChEBI" id="CHEBI:83834"/>
        <dbReference type="EC" id="5.2.1.8"/>
    </reaction>
</comment>
<comment type="subcellular location">
    <subcellularLocation>
        <location>Cytoplasm</location>
    </subcellularLocation>
    <text evidence="1">About half TF is bound to the ribosome near the polypeptide exit tunnel while the other half is free in the cytoplasm.</text>
</comment>
<comment type="domain">
    <text evidence="1">Consists of 3 domains; the N-terminus binds the ribosome, the middle domain has PPIase activity, while the C-terminus has intrinsic chaperone activity on its own.</text>
</comment>
<comment type="similarity">
    <text evidence="3">Belongs to the FKBP-type PPIase family. Tig subfamily.</text>
</comment>
<organism>
    <name type="scientific">Synechocystis sp. (strain ATCC 27184 / PCC 6803 / Kazusa)</name>
    <dbReference type="NCBI Taxonomy" id="1111708"/>
    <lineage>
        <taxon>Bacteria</taxon>
        <taxon>Bacillati</taxon>
        <taxon>Cyanobacteriota</taxon>
        <taxon>Cyanophyceae</taxon>
        <taxon>Synechococcales</taxon>
        <taxon>Merismopediaceae</taxon>
        <taxon>Synechocystis</taxon>
    </lineage>
</organism>
<accession>Q55511</accession>
<proteinExistence type="inferred from homology"/>
<sequence>MKVTQEKLPDSQVGLEIEIPATASKKVYENVVKKLTRTVNIPGFRRGKVPRAIVIQRLGQSYIKATAIEELIDDSIKAAVKQEELPIIGNFSLRSDMENLIQIFDPEAPLTIKVAADVFPEAEYEPESYKKITAQAEEIEYSADAVDQWLKGEQEKRATLVPVEDRPAALGDLAIVDYAAFQVAEDGQAGEAIAEVKGSDFEVTLEDGRFVAGIVDGIVGMAVDETKLIPVTFPEDYPLEAVAGEDVLFEIKLKEIKFRELPELDDDFAEDVSEFETMAELKADLEKQFQEQAKQRTDDNIKAAIKKKLGELFTGDLPETMIKQECDRLVAQTAMELERMGLDVSQLFRQGDDMLQTLKDNSRPEAIANLKTDLMIGAIAKEEKIQPTEAEVKERCDELRQEFKGEKIDESRLVNFVESSLTESKVLDLLKEWADVELLPEGSLSQTEEDTPDDDAEEEAIVDVEATSDEE</sequence>
<feature type="chain" id="PRO_0000179451" description="Trigger factor">
    <location>
        <begin position="1"/>
        <end position="471"/>
    </location>
</feature>
<feature type="domain" description="PPIase FKBP-type">
    <location>
        <begin position="171"/>
        <end position="262"/>
    </location>
</feature>
<feature type="region of interest" description="Disordered" evidence="2">
    <location>
        <begin position="440"/>
        <end position="471"/>
    </location>
</feature>
<feature type="compositionally biased region" description="Acidic residues" evidence="2">
    <location>
        <begin position="447"/>
        <end position="471"/>
    </location>
</feature>
<name>TIG_SYNY3</name>